<evidence type="ECO:0000255" key="1">
    <source>
        <dbReference type="HAMAP-Rule" id="MF_00378"/>
    </source>
</evidence>
<dbReference type="EC" id="3.1.11.6" evidence="1"/>
<dbReference type="EMBL" id="AE006468">
    <property type="protein sequence ID" value="AAL21406.1"/>
    <property type="molecule type" value="Genomic_DNA"/>
</dbReference>
<dbReference type="RefSeq" id="NP_461447.1">
    <property type="nucleotide sequence ID" value="NC_003197.2"/>
</dbReference>
<dbReference type="RefSeq" id="WP_000953165.1">
    <property type="nucleotide sequence ID" value="NC_003197.2"/>
</dbReference>
<dbReference type="SMR" id="Q8ZN58"/>
<dbReference type="STRING" id="99287.STM2512"/>
<dbReference type="PaxDb" id="99287-STM2512"/>
<dbReference type="GeneID" id="1254034"/>
<dbReference type="KEGG" id="stm:STM2512"/>
<dbReference type="PATRIC" id="fig|99287.12.peg.2648"/>
<dbReference type="HOGENOM" id="CLU_023625_3_1_6"/>
<dbReference type="OMA" id="WPAVRFE"/>
<dbReference type="PhylomeDB" id="Q8ZN58"/>
<dbReference type="BioCyc" id="SENT99287:STM2512-MONOMER"/>
<dbReference type="Proteomes" id="UP000001014">
    <property type="component" value="Chromosome"/>
</dbReference>
<dbReference type="GO" id="GO:0005737">
    <property type="term" value="C:cytoplasm"/>
    <property type="evidence" value="ECO:0007669"/>
    <property type="project" value="UniProtKB-SubCell"/>
</dbReference>
<dbReference type="GO" id="GO:0009318">
    <property type="term" value="C:exodeoxyribonuclease VII complex"/>
    <property type="evidence" value="ECO:0007669"/>
    <property type="project" value="InterPro"/>
</dbReference>
<dbReference type="GO" id="GO:0008855">
    <property type="term" value="F:exodeoxyribonuclease VII activity"/>
    <property type="evidence" value="ECO:0007669"/>
    <property type="project" value="UniProtKB-UniRule"/>
</dbReference>
<dbReference type="GO" id="GO:0003676">
    <property type="term" value="F:nucleic acid binding"/>
    <property type="evidence" value="ECO:0007669"/>
    <property type="project" value="InterPro"/>
</dbReference>
<dbReference type="GO" id="GO:0006308">
    <property type="term" value="P:DNA catabolic process"/>
    <property type="evidence" value="ECO:0007669"/>
    <property type="project" value="UniProtKB-UniRule"/>
</dbReference>
<dbReference type="CDD" id="cd04489">
    <property type="entry name" value="ExoVII_LU_OBF"/>
    <property type="match status" value="1"/>
</dbReference>
<dbReference type="HAMAP" id="MF_00378">
    <property type="entry name" value="Exonuc_7_L"/>
    <property type="match status" value="1"/>
</dbReference>
<dbReference type="InterPro" id="IPR003753">
    <property type="entry name" value="Exonuc_VII_L"/>
</dbReference>
<dbReference type="InterPro" id="IPR020579">
    <property type="entry name" value="Exonuc_VII_lsu_C"/>
</dbReference>
<dbReference type="InterPro" id="IPR025824">
    <property type="entry name" value="OB-fold_nuc-bd_dom"/>
</dbReference>
<dbReference type="NCBIfam" id="TIGR00237">
    <property type="entry name" value="xseA"/>
    <property type="match status" value="1"/>
</dbReference>
<dbReference type="PANTHER" id="PTHR30008">
    <property type="entry name" value="EXODEOXYRIBONUCLEASE 7 LARGE SUBUNIT"/>
    <property type="match status" value="1"/>
</dbReference>
<dbReference type="PANTHER" id="PTHR30008:SF0">
    <property type="entry name" value="EXODEOXYRIBONUCLEASE 7 LARGE SUBUNIT"/>
    <property type="match status" value="1"/>
</dbReference>
<dbReference type="Pfam" id="PF02601">
    <property type="entry name" value="Exonuc_VII_L"/>
    <property type="match status" value="1"/>
</dbReference>
<dbReference type="Pfam" id="PF13742">
    <property type="entry name" value="tRNA_anti_2"/>
    <property type="match status" value="1"/>
</dbReference>
<protein>
    <recommendedName>
        <fullName evidence="1">Exodeoxyribonuclease 7 large subunit</fullName>
        <ecNumber evidence="1">3.1.11.6</ecNumber>
    </recommendedName>
    <alternativeName>
        <fullName evidence="1">Exodeoxyribonuclease VII large subunit</fullName>
        <shortName evidence="1">Exonuclease VII large subunit</shortName>
    </alternativeName>
</protein>
<name>EX7L_SALTY</name>
<sequence length="449" mass="50614">MLSSQTSSIFTVSRLNQTVRLLLEQEMGQVWISGEISNFTQPASGHWYFTLKDDTAQVRCAMFRNSNRRVTFRPQHGQQVLVRANITLYEPRGDYQIIAESMQPAGEGLLQQKYEQLKAKLQAEGLFDQQHKQPLPSPAHCVGVITSKTGAALHDILHVLKRRDPSLPVIIYPTAVQGDDAPGQIVRAIELANARGECDVLIVGRGGGSLEDLWSFNDERVARAIFASRIPVVSAVGHETDVTIADFVADLRAPTPSAAAEIVSRNQQELLRQIQSAQQRLGMAMDYYLANRSRRFTQIFHRLQQQHPQLRLARQQTALERLRQRMGFALEARIKQANQRQQCVSQRLSQQNPQPRIHRAQSRIQQLEYRLTENIRSRLSEQRERFGNAVTHLEAVSPLATLARGYTVSTTTDGKVLKKIKQVKAGDIMTTRLEDGWLESEVKSVTPGT</sequence>
<comment type="function">
    <text evidence="1">Bidirectionally degrades single-stranded DNA into large acid-insoluble oligonucleotides, which are then degraded further into small acid-soluble oligonucleotides.</text>
</comment>
<comment type="catalytic activity">
    <reaction evidence="1">
        <text>Exonucleolytic cleavage in either 5'- to 3'- or 3'- to 5'-direction to yield nucleoside 5'-phosphates.</text>
        <dbReference type="EC" id="3.1.11.6"/>
    </reaction>
</comment>
<comment type="subunit">
    <text evidence="1">Heterooligomer composed of large and small subunits.</text>
</comment>
<comment type="subcellular location">
    <subcellularLocation>
        <location evidence="1">Cytoplasm</location>
    </subcellularLocation>
</comment>
<comment type="similarity">
    <text evidence="1">Belongs to the XseA family.</text>
</comment>
<reference key="1">
    <citation type="journal article" date="2001" name="Nature">
        <title>Complete genome sequence of Salmonella enterica serovar Typhimurium LT2.</title>
        <authorList>
            <person name="McClelland M."/>
            <person name="Sanderson K.E."/>
            <person name="Spieth J."/>
            <person name="Clifton S.W."/>
            <person name="Latreille P."/>
            <person name="Courtney L."/>
            <person name="Porwollik S."/>
            <person name="Ali J."/>
            <person name="Dante M."/>
            <person name="Du F."/>
            <person name="Hou S."/>
            <person name="Layman D."/>
            <person name="Leonard S."/>
            <person name="Nguyen C."/>
            <person name="Scott K."/>
            <person name="Holmes A."/>
            <person name="Grewal N."/>
            <person name="Mulvaney E."/>
            <person name="Ryan E."/>
            <person name="Sun H."/>
            <person name="Florea L."/>
            <person name="Miller W."/>
            <person name="Stoneking T."/>
            <person name="Nhan M."/>
            <person name="Waterston R."/>
            <person name="Wilson R.K."/>
        </authorList>
    </citation>
    <scope>NUCLEOTIDE SEQUENCE [LARGE SCALE GENOMIC DNA]</scope>
    <source>
        <strain>LT2 / SGSC1412 / ATCC 700720</strain>
    </source>
</reference>
<organism>
    <name type="scientific">Salmonella typhimurium (strain LT2 / SGSC1412 / ATCC 700720)</name>
    <dbReference type="NCBI Taxonomy" id="99287"/>
    <lineage>
        <taxon>Bacteria</taxon>
        <taxon>Pseudomonadati</taxon>
        <taxon>Pseudomonadota</taxon>
        <taxon>Gammaproteobacteria</taxon>
        <taxon>Enterobacterales</taxon>
        <taxon>Enterobacteriaceae</taxon>
        <taxon>Salmonella</taxon>
    </lineage>
</organism>
<feature type="chain" id="PRO_0000197875" description="Exodeoxyribonuclease 7 large subunit">
    <location>
        <begin position="1"/>
        <end position="449"/>
    </location>
</feature>
<keyword id="KW-0963">Cytoplasm</keyword>
<keyword id="KW-0269">Exonuclease</keyword>
<keyword id="KW-0378">Hydrolase</keyword>
<keyword id="KW-0540">Nuclease</keyword>
<keyword id="KW-1185">Reference proteome</keyword>
<proteinExistence type="inferred from homology"/>
<gene>
    <name evidence="1" type="primary">xseA</name>
    <name type="ordered locus">STM2512</name>
</gene>
<accession>Q8ZN58</accession>